<dbReference type="EC" id="3.1.-.-"/>
<dbReference type="EMBL" id="AL138648">
    <property type="protein sequence ID" value="CAB86428.1"/>
    <property type="status" value="ALT_SEQ"/>
    <property type="molecule type" value="Genomic_DNA"/>
</dbReference>
<dbReference type="EMBL" id="CP002686">
    <property type="protein sequence ID" value="AEE80459.1"/>
    <property type="molecule type" value="Genomic_DNA"/>
</dbReference>
<dbReference type="EMBL" id="AF370300">
    <property type="protein sequence ID" value="AAK44115.1"/>
    <property type="molecule type" value="mRNA"/>
</dbReference>
<dbReference type="EMBL" id="AY063087">
    <property type="protein sequence ID" value="AAL34261.1"/>
    <property type="molecule type" value="mRNA"/>
</dbReference>
<dbReference type="PIR" id="T48116">
    <property type="entry name" value="T48116"/>
</dbReference>
<dbReference type="RefSeq" id="NP_567144.1">
    <property type="nucleotide sequence ID" value="NM_116192.4"/>
</dbReference>
<dbReference type="SMR" id="Q94K49"/>
<dbReference type="FunCoup" id="Q94K49">
    <property type="interactions" value="964"/>
</dbReference>
<dbReference type="STRING" id="3702.Q94K49"/>
<dbReference type="PaxDb" id="3702-AT3G63270.1"/>
<dbReference type="ProteomicsDB" id="244958"/>
<dbReference type="EnsemblPlants" id="AT3G63270.1">
    <property type="protein sequence ID" value="AT3G63270.1"/>
    <property type="gene ID" value="AT3G63270"/>
</dbReference>
<dbReference type="GeneID" id="825502"/>
<dbReference type="Gramene" id="AT3G63270.1">
    <property type="protein sequence ID" value="AT3G63270.1"/>
    <property type="gene ID" value="AT3G63270"/>
</dbReference>
<dbReference type="KEGG" id="ath:AT3G63270"/>
<dbReference type="Araport" id="AT3G63270"/>
<dbReference type="TAIR" id="AT3G63270">
    <property type="gene designation" value="ALP1"/>
</dbReference>
<dbReference type="eggNOG" id="KOG4585">
    <property type="taxonomic scope" value="Eukaryota"/>
</dbReference>
<dbReference type="HOGENOM" id="CLU_018552_3_4_1"/>
<dbReference type="InParanoid" id="Q94K49"/>
<dbReference type="OMA" id="HEMRFLN"/>
<dbReference type="OrthoDB" id="2668416at2759"/>
<dbReference type="PhylomeDB" id="Q94K49"/>
<dbReference type="PRO" id="PR:Q94K49"/>
<dbReference type="Proteomes" id="UP000006548">
    <property type="component" value="Chromosome 3"/>
</dbReference>
<dbReference type="ExpressionAtlas" id="Q94K49">
    <property type="expression patterns" value="baseline and differential"/>
</dbReference>
<dbReference type="GO" id="GO:0035098">
    <property type="term" value="C:ESC/E(Z) complex"/>
    <property type="evidence" value="ECO:0000314"/>
    <property type="project" value="UniProtKB"/>
</dbReference>
<dbReference type="GO" id="GO:0005634">
    <property type="term" value="C:nucleus"/>
    <property type="evidence" value="ECO:0000314"/>
    <property type="project" value="TAIR"/>
</dbReference>
<dbReference type="GO" id="GO:0035102">
    <property type="term" value="C:PRC1 complex"/>
    <property type="evidence" value="ECO:0000315"/>
    <property type="project" value="UniProtKB"/>
</dbReference>
<dbReference type="GO" id="GO:0003682">
    <property type="term" value="F:chromatin binding"/>
    <property type="evidence" value="ECO:0000353"/>
    <property type="project" value="TAIR"/>
</dbReference>
<dbReference type="GO" id="GO:0046872">
    <property type="term" value="F:metal ion binding"/>
    <property type="evidence" value="ECO:0007669"/>
    <property type="project" value="UniProtKB-KW"/>
</dbReference>
<dbReference type="GO" id="GO:0004518">
    <property type="term" value="F:nuclease activity"/>
    <property type="evidence" value="ECO:0007669"/>
    <property type="project" value="UniProtKB-KW"/>
</dbReference>
<dbReference type="GO" id="GO:0040029">
    <property type="term" value="P:epigenetic regulation of gene expression"/>
    <property type="evidence" value="ECO:0000315"/>
    <property type="project" value="UniProtKB"/>
</dbReference>
<dbReference type="InterPro" id="IPR045249">
    <property type="entry name" value="HARBI1-like"/>
</dbReference>
<dbReference type="InterPro" id="IPR027806">
    <property type="entry name" value="HARBI1_dom"/>
</dbReference>
<dbReference type="PANTHER" id="PTHR22930">
    <property type="match status" value="1"/>
</dbReference>
<dbReference type="PANTHER" id="PTHR22930:SF85">
    <property type="entry name" value="GH03217P-RELATED"/>
    <property type="match status" value="1"/>
</dbReference>
<dbReference type="Pfam" id="PF13359">
    <property type="entry name" value="DDE_Tnp_4"/>
    <property type="match status" value="1"/>
</dbReference>
<sequence length="396" mass="44972">MAPVKQKKKNKKKPLDKAKKLAKNKEKKRVNAVPLDPEAIDCDWWDTFWLRNSSPSVPSDEDYAFKHFFRASKTTFSYICSLVREDLISRPPSGLINIEGRLLSVEKQVAIALRRLASGDSQVSVGAAFGVGQSTVSQVTWRFIEALEERAKHHLRWPDSDRIEEIKSKFEEMYGLPNCCGAIDTTHIIMTLPAVQASDDWCDQEKNYSMFLQGVFDHEMRFLNMVTGWPGGMTVSKLLKFSGFFKLCENAQILDGNPKTLSQGAQIREYVVGGISYPLLPWLITPHDSDHPSDSMVAFNERHEKVRSVAATAFQQLKGSWRILSKVMWRPDRRKLPSIILVCCLLHNIIIDCGDYLQEDVPLSGHHDSGYADRYCKQTEPLGSELRGCLTEHLLR</sequence>
<feature type="chain" id="PRO_0000438514" description="Protein ANTAGONIST OF LIKE HETEROCHROMATIN PROTEIN 1">
    <location>
        <begin position="1"/>
        <end position="396"/>
    </location>
</feature>
<feature type="domain" description="DDE Tnp4" evidence="2">
    <location>
        <begin position="183"/>
        <end position="348"/>
    </location>
</feature>
<feature type="region of interest" description="Disordered" evidence="4">
    <location>
        <begin position="1"/>
        <end position="29"/>
    </location>
</feature>
<feature type="short sequence motif" description="Nuclear localization signal" evidence="3">
    <location>
        <begin position="6"/>
        <end position="13"/>
    </location>
</feature>
<feature type="compositionally biased region" description="Basic residues" evidence="4">
    <location>
        <begin position="1"/>
        <end position="12"/>
    </location>
</feature>
<feature type="compositionally biased region" description="Basic residues" evidence="4">
    <location>
        <begin position="20"/>
        <end position="29"/>
    </location>
</feature>
<feature type="mutagenesis site" description="In alp1-1; suppression of lhp1 phenotype." evidence="5">
    <original>G</original>
    <variation>E</variation>
    <location>
        <position position="273"/>
    </location>
</feature>
<reference key="1">
    <citation type="journal article" date="2000" name="Nature">
        <title>Sequence and analysis of chromosome 3 of the plant Arabidopsis thaliana.</title>
        <authorList>
            <person name="Salanoubat M."/>
            <person name="Lemcke K."/>
            <person name="Rieger M."/>
            <person name="Ansorge W."/>
            <person name="Unseld M."/>
            <person name="Fartmann B."/>
            <person name="Valle G."/>
            <person name="Bloecker H."/>
            <person name="Perez-Alonso M."/>
            <person name="Obermaier B."/>
            <person name="Delseny M."/>
            <person name="Boutry M."/>
            <person name="Grivell L.A."/>
            <person name="Mache R."/>
            <person name="Puigdomenech P."/>
            <person name="De Simone V."/>
            <person name="Choisne N."/>
            <person name="Artiguenave F."/>
            <person name="Robert C."/>
            <person name="Brottier P."/>
            <person name="Wincker P."/>
            <person name="Cattolico L."/>
            <person name="Weissenbach J."/>
            <person name="Saurin W."/>
            <person name="Quetier F."/>
            <person name="Schaefer M."/>
            <person name="Mueller-Auer S."/>
            <person name="Gabel C."/>
            <person name="Fuchs M."/>
            <person name="Benes V."/>
            <person name="Wurmbach E."/>
            <person name="Drzonek H."/>
            <person name="Erfle H."/>
            <person name="Jordan N."/>
            <person name="Bangert S."/>
            <person name="Wiedelmann R."/>
            <person name="Kranz H."/>
            <person name="Voss H."/>
            <person name="Holland R."/>
            <person name="Brandt P."/>
            <person name="Nyakatura G."/>
            <person name="Vezzi A."/>
            <person name="D'Angelo M."/>
            <person name="Pallavicini A."/>
            <person name="Toppo S."/>
            <person name="Simionati B."/>
            <person name="Conrad A."/>
            <person name="Hornischer K."/>
            <person name="Kauer G."/>
            <person name="Loehnert T.-H."/>
            <person name="Nordsiek G."/>
            <person name="Reichelt J."/>
            <person name="Scharfe M."/>
            <person name="Schoen O."/>
            <person name="Bargues M."/>
            <person name="Terol J."/>
            <person name="Climent J."/>
            <person name="Navarro P."/>
            <person name="Collado C."/>
            <person name="Perez-Perez A."/>
            <person name="Ottenwaelder B."/>
            <person name="Duchemin D."/>
            <person name="Cooke R."/>
            <person name="Laudie M."/>
            <person name="Berger-Llauro C."/>
            <person name="Purnelle B."/>
            <person name="Masuy D."/>
            <person name="de Haan M."/>
            <person name="Maarse A.C."/>
            <person name="Alcaraz J.-P."/>
            <person name="Cottet A."/>
            <person name="Casacuberta E."/>
            <person name="Monfort A."/>
            <person name="Argiriou A."/>
            <person name="Flores M."/>
            <person name="Liguori R."/>
            <person name="Vitale D."/>
            <person name="Mannhaupt G."/>
            <person name="Haase D."/>
            <person name="Schoof H."/>
            <person name="Rudd S."/>
            <person name="Zaccaria P."/>
            <person name="Mewes H.-W."/>
            <person name="Mayer K.F.X."/>
            <person name="Kaul S."/>
            <person name="Town C.D."/>
            <person name="Koo H.L."/>
            <person name="Tallon L.J."/>
            <person name="Jenkins J."/>
            <person name="Rooney T."/>
            <person name="Rizzo M."/>
            <person name="Walts A."/>
            <person name="Utterback T."/>
            <person name="Fujii C.Y."/>
            <person name="Shea T.P."/>
            <person name="Creasy T.H."/>
            <person name="Haas B."/>
            <person name="Maiti R."/>
            <person name="Wu D."/>
            <person name="Peterson J."/>
            <person name="Van Aken S."/>
            <person name="Pai G."/>
            <person name="Militscher J."/>
            <person name="Sellers P."/>
            <person name="Gill J.E."/>
            <person name="Feldblyum T.V."/>
            <person name="Preuss D."/>
            <person name="Lin X."/>
            <person name="Nierman W.C."/>
            <person name="Salzberg S.L."/>
            <person name="White O."/>
            <person name="Venter J.C."/>
            <person name="Fraser C.M."/>
            <person name="Kaneko T."/>
            <person name="Nakamura Y."/>
            <person name="Sato S."/>
            <person name="Kato T."/>
            <person name="Asamizu E."/>
            <person name="Sasamoto S."/>
            <person name="Kimura T."/>
            <person name="Idesawa K."/>
            <person name="Kawashima K."/>
            <person name="Kishida Y."/>
            <person name="Kiyokawa C."/>
            <person name="Kohara M."/>
            <person name="Matsumoto M."/>
            <person name="Matsuno A."/>
            <person name="Muraki A."/>
            <person name="Nakayama S."/>
            <person name="Nakazaki N."/>
            <person name="Shinpo S."/>
            <person name="Takeuchi C."/>
            <person name="Wada T."/>
            <person name="Watanabe A."/>
            <person name="Yamada M."/>
            <person name="Yasuda M."/>
            <person name="Tabata S."/>
        </authorList>
    </citation>
    <scope>NUCLEOTIDE SEQUENCE [LARGE SCALE GENOMIC DNA]</scope>
    <source>
        <strain>cv. Columbia</strain>
    </source>
</reference>
<reference key="2">
    <citation type="journal article" date="2017" name="Plant J.">
        <title>Araport11: a complete reannotation of the Arabidopsis thaliana reference genome.</title>
        <authorList>
            <person name="Cheng C.Y."/>
            <person name="Krishnakumar V."/>
            <person name="Chan A.P."/>
            <person name="Thibaud-Nissen F."/>
            <person name="Schobel S."/>
            <person name="Town C.D."/>
        </authorList>
    </citation>
    <scope>GENOME REANNOTATION</scope>
    <source>
        <strain>cv. Columbia</strain>
    </source>
</reference>
<reference key="3">
    <citation type="journal article" date="2003" name="Science">
        <title>Empirical analysis of transcriptional activity in the Arabidopsis genome.</title>
        <authorList>
            <person name="Yamada K."/>
            <person name="Lim J."/>
            <person name="Dale J.M."/>
            <person name="Chen H."/>
            <person name="Shinn P."/>
            <person name="Palm C.J."/>
            <person name="Southwick A.M."/>
            <person name="Wu H.C."/>
            <person name="Kim C.J."/>
            <person name="Nguyen M."/>
            <person name="Pham P.K."/>
            <person name="Cheuk R.F."/>
            <person name="Karlin-Newmann G."/>
            <person name="Liu S.X."/>
            <person name="Lam B."/>
            <person name="Sakano H."/>
            <person name="Wu T."/>
            <person name="Yu G."/>
            <person name="Miranda M."/>
            <person name="Quach H.L."/>
            <person name="Tripp M."/>
            <person name="Chang C.H."/>
            <person name="Lee J.M."/>
            <person name="Toriumi M.J."/>
            <person name="Chan M.M."/>
            <person name="Tang C.C."/>
            <person name="Onodera C.S."/>
            <person name="Deng J.M."/>
            <person name="Akiyama K."/>
            <person name="Ansari Y."/>
            <person name="Arakawa T."/>
            <person name="Banh J."/>
            <person name="Banno F."/>
            <person name="Bowser L."/>
            <person name="Brooks S.Y."/>
            <person name="Carninci P."/>
            <person name="Chao Q."/>
            <person name="Choy N."/>
            <person name="Enju A."/>
            <person name="Goldsmith A.D."/>
            <person name="Gurjal M."/>
            <person name="Hansen N.F."/>
            <person name="Hayashizaki Y."/>
            <person name="Johnson-Hopson C."/>
            <person name="Hsuan V.W."/>
            <person name="Iida K."/>
            <person name="Karnes M."/>
            <person name="Khan S."/>
            <person name="Koesema E."/>
            <person name="Ishida J."/>
            <person name="Jiang P.X."/>
            <person name="Jones T."/>
            <person name="Kawai J."/>
            <person name="Kamiya A."/>
            <person name="Meyers C."/>
            <person name="Nakajima M."/>
            <person name="Narusaka M."/>
            <person name="Seki M."/>
            <person name="Sakurai T."/>
            <person name="Satou M."/>
            <person name="Tamse R."/>
            <person name="Vaysberg M."/>
            <person name="Wallender E.K."/>
            <person name="Wong C."/>
            <person name="Yamamura Y."/>
            <person name="Yuan S."/>
            <person name="Shinozaki K."/>
            <person name="Davis R.W."/>
            <person name="Theologis A."/>
            <person name="Ecker J.R."/>
        </authorList>
    </citation>
    <scope>NUCLEOTIDE SEQUENCE [LARGE SCALE MRNA]</scope>
    <source>
        <strain>cv. Columbia</strain>
    </source>
</reference>
<reference key="4">
    <citation type="journal article" date="2012" name="Plant Physiol.">
        <title>Fast isogenic mapping-by-sequencing of ethyl methanesulfonate-induced mutant bulks.</title>
        <authorList>
            <person name="Hartwig B."/>
            <person name="James G.V."/>
            <person name="Konrad K."/>
            <person name="Schneeberger K."/>
            <person name="Turck F."/>
        </authorList>
    </citation>
    <scope>FUNCTION</scope>
    <scope>DISRUPTION PHENOTYPE</scope>
    <scope>MUTAGENESIS OF GLY-273</scope>
    <source>
        <strain>cv. Columbia</strain>
        <strain>cv. Landsberg erecta</strain>
    </source>
</reference>
<reference key="5">
    <citation type="journal article" date="2015" name="PLoS Genet.">
        <title>Kicking against the PRCs - A domesticated transposase antagonises silencing mediated by polycomb group proteins and is an accessory component of polycomb repressive complex 2.</title>
        <authorList>
            <person name="Liang S.C."/>
            <person name="Hartwig B."/>
            <person name="Perera P."/>
            <person name="Mora-Garcia S."/>
            <person name="de Leau E."/>
            <person name="Thornton H."/>
            <person name="de Lima Alves F."/>
            <person name="de Alves F.L."/>
            <person name="Rappsilber J."/>
            <person name="Rapsilber J."/>
            <person name="Yang S."/>
            <person name="James G.V."/>
            <person name="Schneeberger K."/>
            <person name="Finnegan E.J."/>
            <person name="Turck F."/>
            <person name="Goodrich J."/>
        </authorList>
    </citation>
    <scope>FUNCTION</scope>
    <scope>DISRUPTION PHENOTYPE</scope>
    <scope>SUBUNIT</scope>
    <scope>INTERACTION WITH CLF; MSI1; FIE; EMF2 AND VRN2</scope>
    <scope>TISSUE SPECIFICITY</scope>
    <scope>SUBCELLULAR LOCATION</scope>
    <source>
        <strain>cv. Columbia</strain>
        <strain>cv. Landsberg erecta</strain>
        <strain>cv. Wassilewskija</strain>
    </source>
</reference>
<reference key="6">
    <citation type="journal article" date="2016" name="PLoS Genet.">
        <title>Public service by a selfish gene: A domesticated transposase antagonizes polycomb function.</title>
        <authorList>
            <person name="Ricci W.A."/>
            <person name="Zhang X."/>
        </authorList>
    </citation>
    <scope>REVIEW</scope>
</reference>
<proteinExistence type="evidence at protein level"/>
<comment type="function">
    <text evidence="6 8">Transposase-derived protein that may have nuclease activity (Probable). Antagonist of polycomb-group (PcG) protein-mediated chromatin silencing, probably by preventing the association of POLYCOMB REPRESSIVE COMPLEX 2 (PRC2) with its accessory components. Needed for full reactivation of several floral homeotic genes that are repressed by PcG (PubMed:26642436).</text>
</comment>
<comment type="cofactor">
    <cofactor evidence="1">
        <name>a divalent metal cation</name>
        <dbReference type="ChEBI" id="CHEBI:60240"/>
    </cofactor>
</comment>
<comment type="subunit">
    <text evidence="6">Interacts with core components of POLYCOMB REPRESSIVE COMPLEX 2 (PRC2), a PcG protein complex with H3K27me3 histone methyltransferase activity. Associates with plant-specific PRC2 accessory components such as MSI1, EMF2, VRN2, FIE and CLF.</text>
</comment>
<comment type="subcellular location">
    <subcellularLocation>
        <location evidence="3 6">Nucleus</location>
    </subcellularLocation>
</comment>
<comment type="tissue specificity">
    <text evidence="6">Expressed in roots, inflorescence stems, seedlings, leaves, flower buds, inflorescences, and siliques.</text>
</comment>
<comment type="disruption phenotype">
    <text evidence="5 6">Suppression of PcG defects in several PRC1 and PRC2 components including lhp1 (in alp1-2 and alp1-3 mutants) and clf (in alp1-3 and alp1-4 mutants) phenotypes (PubMed:22837357, PubMed:26642436). In alp1-4, weak downward curling and slightly late flowering in short days. Increases synergistically ult1 and ult2 floral organ defects in double mutants alp1-3 ult1 and alp1-3 ult2. The double mutant alp1-3 efs has a stronger dwarf, branched phenotype than efs single mutant (PubMed:26642436).</text>
</comment>
<comment type="similarity">
    <text evidence="8">Belongs to the HARBI1 family.</text>
</comment>
<comment type="sequence caution" evidence="8">
    <conflict type="erroneous gene model prediction">
        <sequence resource="EMBL-CDS" id="CAB86428"/>
    </conflict>
</comment>
<accession>Q94K49</accession>
<accession>Q9M1W3</accession>
<keyword id="KW-0378">Hydrolase</keyword>
<keyword id="KW-0479">Metal-binding</keyword>
<keyword id="KW-0540">Nuclease</keyword>
<keyword id="KW-0539">Nucleus</keyword>
<keyword id="KW-1185">Reference proteome</keyword>
<keyword id="KW-0804">Transcription</keyword>
<keyword id="KW-0805">Transcription regulation</keyword>
<organism>
    <name type="scientific">Arabidopsis thaliana</name>
    <name type="common">Mouse-ear cress</name>
    <dbReference type="NCBI Taxonomy" id="3702"/>
    <lineage>
        <taxon>Eukaryota</taxon>
        <taxon>Viridiplantae</taxon>
        <taxon>Streptophyta</taxon>
        <taxon>Embryophyta</taxon>
        <taxon>Tracheophyta</taxon>
        <taxon>Spermatophyta</taxon>
        <taxon>Magnoliopsida</taxon>
        <taxon>eudicotyledons</taxon>
        <taxon>Gunneridae</taxon>
        <taxon>Pentapetalae</taxon>
        <taxon>rosids</taxon>
        <taxon>malvids</taxon>
        <taxon>Brassicales</taxon>
        <taxon>Brassicaceae</taxon>
        <taxon>Camelineae</taxon>
        <taxon>Arabidopsis</taxon>
    </lineage>
</organism>
<gene>
    <name evidence="7" type="primary">ALP1</name>
    <name evidence="9" type="ordered locus">At3g63270</name>
    <name evidence="10" type="ORF">F16M2.120</name>
</gene>
<name>ALP1_ARATH</name>
<protein>
    <recommendedName>
        <fullName evidence="7">Protein ANTAGONIST OF LIKE HETEROCHROMATIN PROTEIN 1</fullName>
        <ecNumber>3.1.-.-</ecNumber>
    </recommendedName>
</protein>
<evidence type="ECO:0000250" key="1">
    <source>
        <dbReference type="UniProtKB" id="Q96MB7"/>
    </source>
</evidence>
<evidence type="ECO:0000255" key="2"/>
<evidence type="ECO:0000255" key="3">
    <source>
        <dbReference type="PROSITE-ProRule" id="PRU00768"/>
    </source>
</evidence>
<evidence type="ECO:0000256" key="4">
    <source>
        <dbReference type="SAM" id="MobiDB-lite"/>
    </source>
</evidence>
<evidence type="ECO:0000269" key="5">
    <source>
    </source>
</evidence>
<evidence type="ECO:0000269" key="6">
    <source>
    </source>
</evidence>
<evidence type="ECO:0000303" key="7">
    <source>
    </source>
</evidence>
<evidence type="ECO:0000305" key="8"/>
<evidence type="ECO:0000312" key="9">
    <source>
        <dbReference type="Araport" id="AT3G63270"/>
    </source>
</evidence>
<evidence type="ECO:0000312" key="10">
    <source>
        <dbReference type="EMBL" id="CAB86428.1"/>
    </source>
</evidence>